<name>APT_LACLM</name>
<evidence type="ECO:0000255" key="1">
    <source>
        <dbReference type="HAMAP-Rule" id="MF_00004"/>
    </source>
</evidence>
<organism>
    <name type="scientific">Lactococcus lactis subsp. cremoris (strain MG1363)</name>
    <dbReference type="NCBI Taxonomy" id="416870"/>
    <lineage>
        <taxon>Bacteria</taxon>
        <taxon>Bacillati</taxon>
        <taxon>Bacillota</taxon>
        <taxon>Bacilli</taxon>
        <taxon>Lactobacillales</taxon>
        <taxon>Streptococcaceae</taxon>
        <taxon>Lactococcus</taxon>
        <taxon>Lactococcus cremoris subsp. cremoris</taxon>
    </lineage>
</organism>
<feature type="chain" id="PRO_0000329354" description="Adenine phosphoribosyltransferase">
    <location>
        <begin position="1"/>
        <end position="170"/>
    </location>
</feature>
<protein>
    <recommendedName>
        <fullName evidence="1">Adenine phosphoribosyltransferase</fullName>
        <shortName evidence="1">APRT</shortName>
        <ecNumber evidence="1">2.4.2.7</ecNumber>
    </recommendedName>
</protein>
<reference key="1">
    <citation type="journal article" date="2007" name="J. Bacteriol.">
        <title>The complete genome sequence of the lactic acid bacterial paradigm Lactococcus lactis subsp. cremoris MG1363.</title>
        <authorList>
            <person name="Wegmann U."/>
            <person name="O'Connell-Motherway M."/>
            <person name="Zomer A."/>
            <person name="Buist G."/>
            <person name="Shearman C."/>
            <person name="Canchaya C."/>
            <person name="Ventura M."/>
            <person name="Goesmann A."/>
            <person name="Gasson M.J."/>
            <person name="Kuipers O.P."/>
            <person name="van Sinderen D."/>
            <person name="Kok J."/>
        </authorList>
    </citation>
    <scope>NUCLEOTIDE SEQUENCE [LARGE SCALE GENOMIC DNA]</scope>
    <source>
        <strain>MG1363</strain>
    </source>
</reference>
<dbReference type="EC" id="2.4.2.7" evidence="1"/>
<dbReference type="EMBL" id="AM406671">
    <property type="protein sequence ID" value="CAL97207.1"/>
    <property type="molecule type" value="Genomic_DNA"/>
</dbReference>
<dbReference type="RefSeq" id="WP_011834623.1">
    <property type="nucleotide sequence ID" value="NC_009004.1"/>
</dbReference>
<dbReference type="SMR" id="A2RIW0"/>
<dbReference type="STRING" id="416870.llmg_0607"/>
<dbReference type="GeneID" id="61108911"/>
<dbReference type="KEGG" id="llm:llmg_0607"/>
<dbReference type="eggNOG" id="COG0503">
    <property type="taxonomic scope" value="Bacteria"/>
</dbReference>
<dbReference type="HOGENOM" id="CLU_063339_3_0_9"/>
<dbReference type="OrthoDB" id="9803963at2"/>
<dbReference type="PhylomeDB" id="A2RIW0"/>
<dbReference type="UniPathway" id="UPA00588">
    <property type="reaction ID" value="UER00646"/>
</dbReference>
<dbReference type="Proteomes" id="UP000000364">
    <property type="component" value="Chromosome"/>
</dbReference>
<dbReference type="GO" id="GO:0005737">
    <property type="term" value="C:cytoplasm"/>
    <property type="evidence" value="ECO:0007669"/>
    <property type="project" value="UniProtKB-SubCell"/>
</dbReference>
<dbReference type="GO" id="GO:0002055">
    <property type="term" value="F:adenine binding"/>
    <property type="evidence" value="ECO:0007669"/>
    <property type="project" value="TreeGrafter"/>
</dbReference>
<dbReference type="GO" id="GO:0003999">
    <property type="term" value="F:adenine phosphoribosyltransferase activity"/>
    <property type="evidence" value="ECO:0007669"/>
    <property type="project" value="UniProtKB-UniRule"/>
</dbReference>
<dbReference type="GO" id="GO:0016208">
    <property type="term" value="F:AMP binding"/>
    <property type="evidence" value="ECO:0007669"/>
    <property type="project" value="TreeGrafter"/>
</dbReference>
<dbReference type="GO" id="GO:0006168">
    <property type="term" value="P:adenine salvage"/>
    <property type="evidence" value="ECO:0007669"/>
    <property type="project" value="InterPro"/>
</dbReference>
<dbReference type="GO" id="GO:0044209">
    <property type="term" value="P:AMP salvage"/>
    <property type="evidence" value="ECO:0007669"/>
    <property type="project" value="UniProtKB-UniRule"/>
</dbReference>
<dbReference type="GO" id="GO:0006166">
    <property type="term" value="P:purine ribonucleoside salvage"/>
    <property type="evidence" value="ECO:0007669"/>
    <property type="project" value="UniProtKB-KW"/>
</dbReference>
<dbReference type="CDD" id="cd06223">
    <property type="entry name" value="PRTases_typeI"/>
    <property type="match status" value="1"/>
</dbReference>
<dbReference type="FunFam" id="3.40.50.2020:FF:000004">
    <property type="entry name" value="Adenine phosphoribosyltransferase"/>
    <property type="match status" value="1"/>
</dbReference>
<dbReference type="Gene3D" id="3.40.50.2020">
    <property type="match status" value="1"/>
</dbReference>
<dbReference type="HAMAP" id="MF_00004">
    <property type="entry name" value="Aden_phosphoribosyltr"/>
    <property type="match status" value="1"/>
</dbReference>
<dbReference type="InterPro" id="IPR005764">
    <property type="entry name" value="Ade_phspho_trans"/>
</dbReference>
<dbReference type="InterPro" id="IPR000836">
    <property type="entry name" value="PRibTrfase_dom"/>
</dbReference>
<dbReference type="InterPro" id="IPR029057">
    <property type="entry name" value="PRTase-like"/>
</dbReference>
<dbReference type="InterPro" id="IPR050054">
    <property type="entry name" value="UPRTase/APRTase"/>
</dbReference>
<dbReference type="NCBIfam" id="TIGR01090">
    <property type="entry name" value="apt"/>
    <property type="match status" value="1"/>
</dbReference>
<dbReference type="NCBIfam" id="NF002633">
    <property type="entry name" value="PRK02304.1-2"/>
    <property type="match status" value="1"/>
</dbReference>
<dbReference type="NCBIfam" id="NF002634">
    <property type="entry name" value="PRK02304.1-3"/>
    <property type="match status" value="1"/>
</dbReference>
<dbReference type="NCBIfam" id="NF002636">
    <property type="entry name" value="PRK02304.1-5"/>
    <property type="match status" value="1"/>
</dbReference>
<dbReference type="PANTHER" id="PTHR32315">
    <property type="entry name" value="ADENINE PHOSPHORIBOSYLTRANSFERASE"/>
    <property type="match status" value="1"/>
</dbReference>
<dbReference type="PANTHER" id="PTHR32315:SF3">
    <property type="entry name" value="ADENINE PHOSPHORIBOSYLTRANSFERASE"/>
    <property type="match status" value="1"/>
</dbReference>
<dbReference type="Pfam" id="PF00156">
    <property type="entry name" value="Pribosyltran"/>
    <property type="match status" value="1"/>
</dbReference>
<dbReference type="SUPFAM" id="SSF53271">
    <property type="entry name" value="PRTase-like"/>
    <property type="match status" value="1"/>
</dbReference>
<dbReference type="PROSITE" id="PS00103">
    <property type="entry name" value="PUR_PYR_PR_TRANSFER"/>
    <property type="match status" value="1"/>
</dbReference>
<comment type="function">
    <text evidence="1">Catalyzes a salvage reaction resulting in the formation of AMP, that is energically less costly than de novo synthesis.</text>
</comment>
<comment type="catalytic activity">
    <reaction evidence="1">
        <text>AMP + diphosphate = 5-phospho-alpha-D-ribose 1-diphosphate + adenine</text>
        <dbReference type="Rhea" id="RHEA:16609"/>
        <dbReference type="ChEBI" id="CHEBI:16708"/>
        <dbReference type="ChEBI" id="CHEBI:33019"/>
        <dbReference type="ChEBI" id="CHEBI:58017"/>
        <dbReference type="ChEBI" id="CHEBI:456215"/>
        <dbReference type="EC" id="2.4.2.7"/>
    </reaction>
</comment>
<comment type="pathway">
    <text evidence="1">Purine metabolism; AMP biosynthesis via salvage pathway; AMP from adenine: step 1/1.</text>
</comment>
<comment type="subunit">
    <text evidence="1">Homodimer.</text>
</comment>
<comment type="subcellular location">
    <subcellularLocation>
        <location evidence="1">Cytoplasm</location>
    </subcellularLocation>
</comment>
<comment type="similarity">
    <text evidence="1">Belongs to the purine/pyrimidine phosphoribosyltransferase family.</text>
</comment>
<gene>
    <name evidence="1" type="primary">apt</name>
    <name type="ordered locus">llmg_0607</name>
</gene>
<sequence>MELKDYIATIENYPKEGVVFRDISPLMADGNAYNYAATEIVQYARDKEIDMVVGPEARGFIIGCPVAFALGVGFAPVRKPGKLPREVIEATYEKEYGTDTLTMHSDSIKPGQRVLIVDDLLATGGTIAATIELVEKMGGVVVGCAFLIELDELKGREKIGNYDYKVLMHY</sequence>
<proteinExistence type="inferred from homology"/>
<accession>A2RIW0</accession>
<keyword id="KW-0963">Cytoplasm</keyword>
<keyword id="KW-0328">Glycosyltransferase</keyword>
<keyword id="KW-0660">Purine salvage</keyword>
<keyword id="KW-0808">Transferase</keyword>